<keyword id="KW-0687">Ribonucleoprotein</keyword>
<keyword id="KW-0689">Ribosomal protein</keyword>
<keyword id="KW-0694">RNA-binding</keyword>
<keyword id="KW-0699">rRNA-binding</keyword>
<reference key="1">
    <citation type="journal article" date="2005" name="J. Bacteriol.">
        <title>Insights into genome plasticity and pathogenicity of the plant pathogenic Bacterium Xanthomonas campestris pv. vesicatoria revealed by the complete genome sequence.</title>
        <authorList>
            <person name="Thieme F."/>
            <person name="Koebnik R."/>
            <person name="Bekel T."/>
            <person name="Berger C."/>
            <person name="Boch J."/>
            <person name="Buettner D."/>
            <person name="Caldana C."/>
            <person name="Gaigalat L."/>
            <person name="Goesmann A."/>
            <person name="Kay S."/>
            <person name="Kirchner O."/>
            <person name="Lanz C."/>
            <person name="Linke B."/>
            <person name="McHardy A.C."/>
            <person name="Meyer F."/>
            <person name="Mittenhuber G."/>
            <person name="Nies D.H."/>
            <person name="Niesbach-Kloesgen U."/>
            <person name="Patschkowski T."/>
            <person name="Rueckert C."/>
            <person name="Rupp O."/>
            <person name="Schneiker S."/>
            <person name="Schuster S.C."/>
            <person name="Vorhoelter F.J."/>
            <person name="Weber E."/>
            <person name="Puehler A."/>
            <person name="Bonas U."/>
            <person name="Bartels D."/>
            <person name="Kaiser O."/>
        </authorList>
    </citation>
    <scope>NUCLEOTIDE SEQUENCE [LARGE SCALE GENOMIC DNA]</scope>
    <source>
        <strain>85-10</strain>
    </source>
</reference>
<sequence>MSMTDPIADLLVRIKNAAAVGKQTVKLPSSKIKVAIAQVLKDEGYITDLRVTQTENNKAELEIVLKYFEGRPVIETLKRFSRSGLRQYRGKTELPKVLGGLGIAIISTSKGIMTDAQAREAGVGGEVLCFVA</sequence>
<evidence type="ECO:0000255" key="1">
    <source>
        <dbReference type="HAMAP-Rule" id="MF_01302"/>
    </source>
</evidence>
<evidence type="ECO:0000305" key="2"/>
<dbReference type="EMBL" id="AM039952">
    <property type="protein sequence ID" value="CAJ22644.1"/>
    <property type="molecule type" value="Genomic_DNA"/>
</dbReference>
<dbReference type="RefSeq" id="WP_003486688.1">
    <property type="nucleotide sequence ID" value="NZ_CP017190.1"/>
</dbReference>
<dbReference type="SMR" id="Q3BWW9"/>
<dbReference type="STRING" id="456327.BJD11_17670"/>
<dbReference type="GeneID" id="97509350"/>
<dbReference type="KEGG" id="xcv:XCV1013"/>
<dbReference type="eggNOG" id="COG0096">
    <property type="taxonomic scope" value="Bacteria"/>
</dbReference>
<dbReference type="HOGENOM" id="CLU_098428_0_0_6"/>
<dbReference type="Proteomes" id="UP000007069">
    <property type="component" value="Chromosome"/>
</dbReference>
<dbReference type="GO" id="GO:1990904">
    <property type="term" value="C:ribonucleoprotein complex"/>
    <property type="evidence" value="ECO:0007669"/>
    <property type="project" value="UniProtKB-KW"/>
</dbReference>
<dbReference type="GO" id="GO:0005840">
    <property type="term" value="C:ribosome"/>
    <property type="evidence" value="ECO:0007669"/>
    <property type="project" value="UniProtKB-KW"/>
</dbReference>
<dbReference type="GO" id="GO:0019843">
    <property type="term" value="F:rRNA binding"/>
    <property type="evidence" value="ECO:0007669"/>
    <property type="project" value="UniProtKB-UniRule"/>
</dbReference>
<dbReference type="GO" id="GO:0003735">
    <property type="term" value="F:structural constituent of ribosome"/>
    <property type="evidence" value="ECO:0007669"/>
    <property type="project" value="InterPro"/>
</dbReference>
<dbReference type="GO" id="GO:0006412">
    <property type="term" value="P:translation"/>
    <property type="evidence" value="ECO:0007669"/>
    <property type="project" value="UniProtKB-UniRule"/>
</dbReference>
<dbReference type="FunFam" id="3.30.1370.30:FF:000003">
    <property type="entry name" value="30S ribosomal protein S8"/>
    <property type="match status" value="1"/>
</dbReference>
<dbReference type="FunFam" id="3.30.1490.10:FF:000001">
    <property type="entry name" value="30S ribosomal protein S8"/>
    <property type="match status" value="1"/>
</dbReference>
<dbReference type="Gene3D" id="3.30.1370.30">
    <property type="match status" value="1"/>
</dbReference>
<dbReference type="Gene3D" id="3.30.1490.10">
    <property type="match status" value="1"/>
</dbReference>
<dbReference type="HAMAP" id="MF_01302_B">
    <property type="entry name" value="Ribosomal_uS8_B"/>
    <property type="match status" value="1"/>
</dbReference>
<dbReference type="InterPro" id="IPR000630">
    <property type="entry name" value="Ribosomal_uS8"/>
</dbReference>
<dbReference type="InterPro" id="IPR047863">
    <property type="entry name" value="Ribosomal_uS8_CS"/>
</dbReference>
<dbReference type="InterPro" id="IPR035987">
    <property type="entry name" value="Ribosomal_uS8_sf"/>
</dbReference>
<dbReference type="NCBIfam" id="NF001109">
    <property type="entry name" value="PRK00136.1"/>
    <property type="match status" value="1"/>
</dbReference>
<dbReference type="PANTHER" id="PTHR11758">
    <property type="entry name" value="40S RIBOSOMAL PROTEIN S15A"/>
    <property type="match status" value="1"/>
</dbReference>
<dbReference type="Pfam" id="PF00410">
    <property type="entry name" value="Ribosomal_S8"/>
    <property type="match status" value="1"/>
</dbReference>
<dbReference type="SUPFAM" id="SSF56047">
    <property type="entry name" value="Ribosomal protein S8"/>
    <property type="match status" value="1"/>
</dbReference>
<dbReference type="PROSITE" id="PS00053">
    <property type="entry name" value="RIBOSOMAL_S8"/>
    <property type="match status" value="1"/>
</dbReference>
<protein>
    <recommendedName>
        <fullName evidence="1">Small ribosomal subunit protein uS8</fullName>
    </recommendedName>
    <alternativeName>
        <fullName evidence="2">30S ribosomal protein S8</fullName>
    </alternativeName>
</protein>
<accession>Q3BWW9</accession>
<feature type="chain" id="PRO_0000225901" description="Small ribosomal subunit protein uS8">
    <location>
        <begin position="1"/>
        <end position="132"/>
    </location>
</feature>
<proteinExistence type="inferred from homology"/>
<name>RS8_XANE5</name>
<gene>
    <name evidence="1" type="primary">rpsH</name>
    <name type="ordered locus">XCV1013</name>
</gene>
<comment type="function">
    <text evidence="1">One of the primary rRNA binding proteins, it binds directly to 16S rRNA central domain where it helps coordinate assembly of the platform of the 30S subunit.</text>
</comment>
<comment type="subunit">
    <text evidence="1">Part of the 30S ribosomal subunit. Contacts proteins S5 and S12.</text>
</comment>
<comment type="similarity">
    <text evidence="1">Belongs to the universal ribosomal protein uS8 family.</text>
</comment>
<organism>
    <name type="scientific">Xanthomonas euvesicatoria pv. vesicatoria (strain 85-10)</name>
    <name type="common">Xanthomonas campestris pv. vesicatoria</name>
    <dbReference type="NCBI Taxonomy" id="316273"/>
    <lineage>
        <taxon>Bacteria</taxon>
        <taxon>Pseudomonadati</taxon>
        <taxon>Pseudomonadota</taxon>
        <taxon>Gammaproteobacteria</taxon>
        <taxon>Lysobacterales</taxon>
        <taxon>Lysobacteraceae</taxon>
        <taxon>Xanthomonas</taxon>
    </lineage>
</organism>